<gene>
    <name evidence="18" type="primary">ARMC9</name>
    <name type="synonym">KIAA1868</name>
</gene>
<reference key="1">
    <citation type="journal article" date="2001" name="Cancer Res.">
        <title>Tumor antigens isolated from a patient with vitiligo and T-cell-infiltrated melanoma.</title>
        <authorList>
            <person name="Kiniwa Y."/>
            <person name="Fujita T."/>
            <person name="Akada M."/>
            <person name="Ito K."/>
            <person name="Shofuda T."/>
            <person name="Suzuki Y."/>
            <person name="Yamamoto A."/>
            <person name="Saida T."/>
            <person name="Kawakami Y."/>
        </authorList>
    </citation>
    <scope>NUCLEOTIDE SEQUENCE [MRNA] (ISOFORM 2)</scope>
    <scope>TISSUE SPECIFICITY</scope>
</reference>
<reference key="2">
    <citation type="submission" date="2003-01" db="EMBL/GenBank/DDBJ databases">
        <title>Cloning and characterization of a novel ARM protein.</title>
        <authorList>
            <person name="Chen J."/>
            <person name="Lu Y."/>
            <person name="Xie Y."/>
        </authorList>
    </citation>
    <scope>NUCLEOTIDE SEQUENCE [MRNA] (ISOFORM 2)</scope>
</reference>
<reference key="3">
    <citation type="journal article" date="2007" name="BMC Genomics">
        <title>The full-ORF clone resource of the German cDNA consortium.</title>
        <authorList>
            <person name="Bechtel S."/>
            <person name="Rosenfelder H."/>
            <person name="Duda A."/>
            <person name="Schmidt C.P."/>
            <person name="Ernst U."/>
            <person name="Wellenreuther R."/>
            <person name="Mehrle A."/>
            <person name="Schuster C."/>
            <person name="Bahr A."/>
            <person name="Bloecker H."/>
            <person name="Heubner D."/>
            <person name="Hoerlein A."/>
            <person name="Michel G."/>
            <person name="Wedler H."/>
            <person name="Koehrer K."/>
            <person name="Ottenwaelder B."/>
            <person name="Poustka A."/>
            <person name="Wiemann S."/>
            <person name="Schupp I."/>
        </authorList>
    </citation>
    <scope>NUCLEOTIDE SEQUENCE [LARGE SCALE MRNA] (ISOFORM 2)</scope>
    <source>
        <tissue>Esophageal carcinoma</tissue>
    </source>
</reference>
<reference key="4">
    <citation type="journal article" date="2005" name="Nature">
        <title>Generation and annotation of the DNA sequences of human chromosomes 2 and 4.</title>
        <authorList>
            <person name="Hillier L.W."/>
            <person name="Graves T.A."/>
            <person name="Fulton R.S."/>
            <person name="Fulton L.A."/>
            <person name="Pepin K.H."/>
            <person name="Minx P."/>
            <person name="Wagner-McPherson C."/>
            <person name="Layman D."/>
            <person name="Wylie K."/>
            <person name="Sekhon M."/>
            <person name="Becker M.C."/>
            <person name="Fewell G.A."/>
            <person name="Delehaunty K.D."/>
            <person name="Miner T.L."/>
            <person name="Nash W.E."/>
            <person name="Kremitzki C."/>
            <person name="Oddy L."/>
            <person name="Du H."/>
            <person name="Sun H."/>
            <person name="Bradshaw-Cordum H."/>
            <person name="Ali J."/>
            <person name="Carter J."/>
            <person name="Cordes M."/>
            <person name="Harris A."/>
            <person name="Isak A."/>
            <person name="van Brunt A."/>
            <person name="Nguyen C."/>
            <person name="Du F."/>
            <person name="Courtney L."/>
            <person name="Kalicki J."/>
            <person name="Ozersky P."/>
            <person name="Abbott S."/>
            <person name="Armstrong J."/>
            <person name="Belter E.A."/>
            <person name="Caruso L."/>
            <person name="Cedroni M."/>
            <person name="Cotton M."/>
            <person name="Davidson T."/>
            <person name="Desai A."/>
            <person name="Elliott G."/>
            <person name="Erb T."/>
            <person name="Fronick C."/>
            <person name="Gaige T."/>
            <person name="Haakenson W."/>
            <person name="Haglund K."/>
            <person name="Holmes A."/>
            <person name="Harkins R."/>
            <person name="Kim K."/>
            <person name="Kruchowski S.S."/>
            <person name="Strong C.M."/>
            <person name="Grewal N."/>
            <person name="Goyea E."/>
            <person name="Hou S."/>
            <person name="Levy A."/>
            <person name="Martinka S."/>
            <person name="Mead K."/>
            <person name="McLellan M.D."/>
            <person name="Meyer R."/>
            <person name="Randall-Maher J."/>
            <person name="Tomlinson C."/>
            <person name="Dauphin-Kohlberg S."/>
            <person name="Kozlowicz-Reilly A."/>
            <person name="Shah N."/>
            <person name="Swearengen-Shahid S."/>
            <person name="Snider J."/>
            <person name="Strong J.T."/>
            <person name="Thompson J."/>
            <person name="Yoakum M."/>
            <person name="Leonard S."/>
            <person name="Pearman C."/>
            <person name="Trani L."/>
            <person name="Radionenko M."/>
            <person name="Waligorski J.E."/>
            <person name="Wang C."/>
            <person name="Rock S.M."/>
            <person name="Tin-Wollam A.-M."/>
            <person name="Maupin R."/>
            <person name="Latreille P."/>
            <person name="Wendl M.C."/>
            <person name="Yang S.-P."/>
            <person name="Pohl C."/>
            <person name="Wallis J.W."/>
            <person name="Spieth J."/>
            <person name="Bieri T.A."/>
            <person name="Berkowicz N."/>
            <person name="Nelson J.O."/>
            <person name="Osborne J."/>
            <person name="Ding L."/>
            <person name="Meyer R."/>
            <person name="Sabo A."/>
            <person name="Shotland Y."/>
            <person name="Sinha P."/>
            <person name="Wohldmann P.E."/>
            <person name="Cook L.L."/>
            <person name="Hickenbotham M.T."/>
            <person name="Eldred J."/>
            <person name="Williams D."/>
            <person name="Jones T.A."/>
            <person name="She X."/>
            <person name="Ciccarelli F.D."/>
            <person name="Izaurralde E."/>
            <person name="Taylor J."/>
            <person name="Schmutz J."/>
            <person name="Myers R.M."/>
            <person name="Cox D.R."/>
            <person name="Huang X."/>
            <person name="McPherson J.D."/>
            <person name="Mardis E.R."/>
            <person name="Clifton S.W."/>
            <person name="Warren W.C."/>
            <person name="Chinwalla A.T."/>
            <person name="Eddy S.R."/>
            <person name="Marra M.A."/>
            <person name="Ovcharenko I."/>
            <person name="Furey T.S."/>
            <person name="Miller W."/>
            <person name="Eichler E.E."/>
            <person name="Bork P."/>
            <person name="Suyama M."/>
            <person name="Torrents D."/>
            <person name="Waterston R.H."/>
            <person name="Wilson R.K."/>
        </authorList>
    </citation>
    <scope>NUCLEOTIDE SEQUENCE [LARGE SCALE GENOMIC DNA]</scope>
</reference>
<reference key="5">
    <citation type="journal article" date="2004" name="Genome Res.">
        <title>The status, quality, and expansion of the NIH full-length cDNA project: the Mammalian Gene Collection (MGC).</title>
        <authorList>
            <consortium name="The MGC Project Team"/>
        </authorList>
    </citation>
    <scope>NUCLEOTIDE SEQUENCE [LARGE SCALE MRNA] (ISOFORM 2)</scope>
    <scope>VARIANT PHE-108</scope>
    <source>
        <tissue>Ovary</tissue>
        <tissue>Skin</tissue>
    </source>
</reference>
<reference key="6">
    <citation type="journal article" date="2004" name="Nat. Genet.">
        <title>Complete sequencing and characterization of 21,243 full-length human cDNAs.</title>
        <authorList>
            <person name="Ota T."/>
            <person name="Suzuki Y."/>
            <person name="Nishikawa T."/>
            <person name="Otsuki T."/>
            <person name="Sugiyama T."/>
            <person name="Irie R."/>
            <person name="Wakamatsu A."/>
            <person name="Hayashi K."/>
            <person name="Sato H."/>
            <person name="Nagai K."/>
            <person name="Kimura K."/>
            <person name="Makita H."/>
            <person name="Sekine M."/>
            <person name="Obayashi M."/>
            <person name="Nishi T."/>
            <person name="Shibahara T."/>
            <person name="Tanaka T."/>
            <person name="Ishii S."/>
            <person name="Yamamoto J."/>
            <person name="Saito K."/>
            <person name="Kawai Y."/>
            <person name="Isono Y."/>
            <person name="Nakamura Y."/>
            <person name="Nagahari K."/>
            <person name="Murakami K."/>
            <person name="Yasuda T."/>
            <person name="Iwayanagi T."/>
            <person name="Wagatsuma M."/>
            <person name="Shiratori A."/>
            <person name="Sudo H."/>
            <person name="Hosoiri T."/>
            <person name="Kaku Y."/>
            <person name="Kodaira H."/>
            <person name="Kondo H."/>
            <person name="Sugawara M."/>
            <person name="Takahashi M."/>
            <person name="Kanda K."/>
            <person name="Yokoi T."/>
            <person name="Furuya T."/>
            <person name="Kikkawa E."/>
            <person name="Omura Y."/>
            <person name="Abe K."/>
            <person name="Kamihara K."/>
            <person name="Katsuta N."/>
            <person name="Sato K."/>
            <person name="Tanikawa M."/>
            <person name="Yamazaki M."/>
            <person name="Ninomiya K."/>
            <person name="Ishibashi T."/>
            <person name="Yamashita H."/>
            <person name="Murakawa K."/>
            <person name="Fujimori K."/>
            <person name="Tanai H."/>
            <person name="Kimata M."/>
            <person name="Watanabe M."/>
            <person name="Hiraoka S."/>
            <person name="Chiba Y."/>
            <person name="Ishida S."/>
            <person name="Ono Y."/>
            <person name="Takiguchi S."/>
            <person name="Watanabe S."/>
            <person name="Yosida M."/>
            <person name="Hotuta T."/>
            <person name="Kusano J."/>
            <person name="Kanehori K."/>
            <person name="Takahashi-Fujii A."/>
            <person name="Hara H."/>
            <person name="Tanase T.-O."/>
            <person name="Nomura Y."/>
            <person name="Togiya S."/>
            <person name="Komai F."/>
            <person name="Hara R."/>
            <person name="Takeuchi K."/>
            <person name="Arita M."/>
            <person name="Imose N."/>
            <person name="Musashino K."/>
            <person name="Yuuki H."/>
            <person name="Oshima A."/>
            <person name="Sasaki N."/>
            <person name="Aotsuka S."/>
            <person name="Yoshikawa Y."/>
            <person name="Matsunawa H."/>
            <person name="Ichihara T."/>
            <person name="Shiohata N."/>
            <person name="Sano S."/>
            <person name="Moriya S."/>
            <person name="Momiyama H."/>
            <person name="Satoh N."/>
            <person name="Takami S."/>
            <person name="Terashima Y."/>
            <person name="Suzuki O."/>
            <person name="Nakagawa S."/>
            <person name="Senoh A."/>
            <person name="Mizoguchi H."/>
            <person name="Goto Y."/>
            <person name="Shimizu F."/>
            <person name="Wakebe H."/>
            <person name="Hishigaki H."/>
            <person name="Watanabe T."/>
            <person name="Sugiyama A."/>
            <person name="Takemoto M."/>
            <person name="Kawakami B."/>
            <person name="Yamazaki M."/>
            <person name="Watanabe K."/>
            <person name="Kumagai A."/>
            <person name="Itakura S."/>
            <person name="Fukuzumi Y."/>
            <person name="Fujimori Y."/>
            <person name="Komiyama M."/>
            <person name="Tashiro H."/>
            <person name="Tanigami A."/>
            <person name="Fujiwara T."/>
            <person name="Ono T."/>
            <person name="Yamada K."/>
            <person name="Fujii Y."/>
            <person name="Ozaki K."/>
            <person name="Hirao M."/>
            <person name="Ohmori Y."/>
            <person name="Kawabata A."/>
            <person name="Hikiji T."/>
            <person name="Kobatake N."/>
            <person name="Inagaki H."/>
            <person name="Ikema Y."/>
            <person name="Okamoto S."/>
            <person name="Okitani R."/>
            <person name="Kawakami T."/>
            <person name="Noguchi S."/>
            <person name="Itoh T."/>
            <person name="Shigeta K."/>
            <person name="Senba T."/>
            <person name="Matsumura K."/>
            <person name="Nakajima Y."/>
            <person name="Mizuno T."/>
            <person name="Morinaga M."/>
            <person name="Sasaki M."/>
            <person name="Togashi T."/>
            <person name="Oyama M."/>
            <person name="Hata H."/>
            <person name="Watanabe M."/>
            <person name="Komatsu T."/>
            <person name="Mizushima-Sugano J."/>
            <person name="Satoh T."/>
            <person name="Shirai Y."/>
            <person name="Takahashi Y."/>
            <person name="Nakagawa K."/>
            <person name="Okumura K."/>
            <person name="Nagase T."/>
            <person name="Nomura N."/>
            <person name="Kikuchi H."/>
            <person name="Masuho Y."/>
            <person name="Yamashita R."/>
            <person name="Nakai K."/>
            <person name="Yada T."/>
            <person name="Nakamura Y."/>
            <person name="Ohara O."/>
            <person name="Isogai T."/>
            <person name="Sugano S."/>
        </authorList>
    </citation>
    <scope>NUCLEOTIDE SEQUENCE [LARGE SCALE MRNA] OF 36-818 (ISOFORM 2)</scope>
</reference>
<reference key="7">
    <citation type="journal article" date="2001" name="DNA Res.">
        <title>Prediction of the coding sequences of unidentified human genes. XX. The complete sequences of 100 new cDNA clones from brain which code for large proteins in vitro.</title>
        <authorList>
            <person name="Nagase T."/>
            <person name="Nakayama M."/>
            <person name="Nakajima D."/>
            <person name="Kikuno R."/>
            <person name="Ohara O."/>
        </authorList>
    </citation>
    <scope>NUCLEOTIDE SEQUENCE [LARGE SCALE MRNA] OF 356-818 (ISOFORM 1)</scope>
    <source>
        <tissue>Brain</tissue>
    </source>
</reference>
<reference key="8">
    <citation type="journal article" date="2011" name="Sci. Signal.">
        <title>System-wide temporal characterization of the proteome and phosphoproteome of human embryonic stem cell differentiation.</title>
        <authorList>
            <person name="Rigbolt K.T."/>
            <person name="Prokhorova T.A."/>
            <person name="Akimov V."/>
            <person name="Henningsen J."/>
            <person name="Johansen P.T."/>
            <person name="Kratchmarova I."/>
            <person name="Kassem M."/>
            <person name="Mann M."/>
            <person name="Olsen J.V."/>
            <person name="Blagoev B."/>
        </authorList>
    </citation>
    <scope>PHOSPHORYLATION [LARGE SCALE ANALYSIS] AT SER-582</scope>
    <scope>IDENTIFICATION BY MASS SPECTROMETRY [LARGE SCALE ANALYSIS]</scope>
</reference>
<reference key="9">
    <citation type="journal article" date="2012" name="N. Engl. J. Med.">
        <title>Diagnostic exome sequencing in persons with severe intellectual disability.</title>
        <authorList>
            <person name="de Ligt J."/>
            <person name="Willemsen M.H."/>
            <person name="van Bon B.W."/>
            <person name="Kleefstra T."/>
            <person name="Yntema H.G."/>
            <person name="Kroes T."/>
            <person name="Vulto-van Silfhout A.T."/>
            <person name="Koolen D.A."/>
            <person name="de Vries P."/>
            <person name="Gilissen C."/>
            <person name="del Rosario M."/>
            <person name="Hoischen A."/>
            <person name="Scheffer H."/>
            <person name="de Vries B.B."/>
            <person name="Brunner H.G."/>
            <person name="Veltman J.A."/>
            <person name="Vissers L.E."/>
        </authorList>
    </citation>
    <scope>VARIANT ASN-330</scope>
</reference>
<reference key="10">
    <citation type="journal article" date="2017" name="Am. J. Hum. Genet.">
        <title>Mutations in ARMC9, which encodes a basal body protein, cause Joubert syndrome in humans and ciliopathy phenotypes in zebrafish.</title>
        <authorList>
            <person name="Van De Weghe J.C."/>
            <person name="Rusterholz T.D.S."/>
            <person name="Latour B."/>
            <person name="Grout M.E."/>
            <person name="Aldinger K.A."/>
            <person name="Shaheen R."/>
            <person name="Dempsey J.C."/>
            <person name="Maddirevula S."/>
            <person name="Cheng Y.H."/>
            <person name="Phelps I.G."/>
            <person name="Gesemann M."/>
            <person name="Goel H."/>
            <person name="Birk O.S."/>
            <person name="Alanzi T."/>
            <person name="Rawashdeh R."/>
            <person name="Khan A.O."/>
            <person name="Bamshad M.J."/>
            <person name="Nickerson D.A."/>
            <person name="Neuhauss S.C.F."/>
            <person name="Dobyns W.B."/>
            <person name="Alkuraya F.S."/>
            <person name="Roepman R."/>
            <person name="Bachmann-Gagescu R."/>
            <person name="Doherty D."/>
        </authorList>
    </citation>
    <scope>SUBCELLULAR LOCATION</scope>
    <scope>INDUCTION</scope>
    <scope>INVOLVEMENT IN JBTS30</scope>
    <scope>VARIANTS JBTS30 ARG-69; ARG-87 DEL; CYS-343; CYS-446; ARG-492 AND LEU-520</scope>
</reference>
<reference key="11">
    <citation type="journal article" date="2020" name="J. Clin. Invest.">
        <title>Dysfunction of the ciliary ARMC9/TOGARAM1 protein module causes Joubert syndrome.</title>
        <authorList>
            <consortium name="University of Washington Center for Mendelian Genomics"/>
            <consortium name="Genomics England Research Consortium"/>
            <person name="Latour B.L."/>
            <person name="Van De Weghe J.C."/>
            <person name="Rusterholz T.D."/>
            <person name="Letteboer S.J."/>
            <person name="Gomez A."/>
            <person name="Shaheen R."/>
            <person name="Gesemann M."/>
            <person name="Karamzade A."/>
            <person name="Asadollahi M."/>
            <person name="Barroso-Gil M."/>
            <person name="Chitre M."/>
            <person name="Grout M.E."/>
            <person name="van Reeuwijk J."/>
            <person name="van Beersum S.E."/>
            <person name="Miller C.V."/>
            <person name="Dempsey J.C."/>
            <person name="Morsy H."/>
            <person name="Bamshad M.J."/>
            <person name="Nickerson D.A."/>
            <person name="Neuhauss S.C."/>
            <person name="Boldt K."/>
            <person name="Ueffing M."/>
            <person name="Keramatipour M."/>
            <person name="Sayer J.A."/>
            <person name="Alkuraya F.S."/>
            <person name="Bachmann-Gagescu R."/>
            <person name="Roepman R."/>
            <person name="Doherty D."/>
        </authorList>
    </citation>
    <scope>FUNCTION</scope>
    <scope>INTERACTION WITH TOGARAM1; CCDC66; CEP104; CSPP1 AND CEP290</scope>
</reference>
<reference key="12">
    <citation type="journal article" date="2024" name="J. Clin. Invest.">
        <title>Primary cilia formation requires the Leigh syndrome-associated mitochondrial protein NDUFAF2.</title>
        <authorList>
            <person name="Lo C.H."/>
            <person name="Liu Z."/>
            <person name="Chen S."/>
            <person name="Lin F."/>
            <person name="Berneshawi A.R."/>
            <person name="Yu C.Q."/>
            <person name="Koo E.B."/>
            <person name="Kowal T.J."/>
            <person name="Ning K."/>
            <person name="Hu Y."/>
            <person name="Wang W.J."/>
            <person name="Liao Y.J."/>
            <person name="Sun Y."/>
        </authorList>
    </citation>
    <scope>INTERACTION WITH NDUFAF2</scope>
</reference>
<protein>
    <recommendedName>
        <fullName>LisH domain-containing protein ARMC9</fullName>
    </recommendedName>
    <alternativeName>
        <fullName>Armadillo repeat-containing protein 9</fullName>
    </alternativeName>
    <alternativeName>
        <fullName>Melanoma/melanocyte-specific tumor antigen KU-MEL-1</fullName>
    </alternativeName>
    <alternativeName>
        <fullName>NS21</fullName>
    </alternativeName>
</protein>
<name>ARMC9_HUMAN</name>
<organism>
    <name type="scientific">Homo sapiens</name>
    <name type="common">Human</name>
    <dbReference type="NCBI Taxonomy" id="9606"/>
    <lineage>
        <taxon>Eukaryota</taxon>
        <taxon>Metazoa</taxon>
        <taxon>Chordata</taxon>
        <taxon>Craniata</taxon>
        <taxon>Vertebrata</taxon>
        <taxon>Euteleostomi</taxon>
        <taxon>Mammalia</taxon>
        <taxon>Eutheria</taxon>
        <taxon>Euarchontoglires</taxon>
        <taxon>Primates</taxon>
        <taxon>Haplorrhini</taxon>
        <taxon>Catarrhini</taxon>
        <taxon>Hominidae</taxon>
        <taxon>Homo</taxon>
    </lineage>
</organism>
<keyword id="KW-0025">Alternative splicing</keyword>
<keyword id="KW-0966">Cell projection</keyword>
<keyword id="KW-1186">Ciliopathy</keyword>
<keyword id="KW-0970">Cilium biogenesis/degradation</keyword>
<keyword id="KW-0175">Coiled coil</keyword>
<keyword id="KW-0963">Cytoplasm</keyword>
<keyword id="KW-0206">Cytoskeleton</keyword>
<keyword id="KW-0979">Joubert syndrome</keyword>
<keyword id="KW-0597">Phosphoprotein</keyword>
<keyword id="KW-1267">Proteomics identification</keyword>
<keyword id="KW-1185">Reference proteome</keyword>
<comment type="function">
    <text evidence="1 2 10">Involved in ciliogenesis (PubMed:32453716). It is required for appropriate acetylation and polyglutamylation of ciliary microtubules, and regulation of cilium length (PubMed:32453716). Acts as a positive regulator of hedgehog (Hh)signaling (By similarity). May participate in the trafficking and/or retention of GLI2 and GLI3 proteins at the ciliary tip (By similarity).</text>
</comment>
<comment type="subunit">
    <text evidence="10 11">Interacts with TOGARAM1, CCDC66, CEP104, CSPP1 and CEP290. Interacts with NDUFAF2 (PubMed:38949024).</text>
</comment>
<comment type="interaction">
    <interactant intactId="EBI-10750859">
        <id>Q7Z3E5</id>
    </interactant>
    <interactant intactId="EBI-2682365">
        <id>Q8N183</id>
        <label>NDUFAF2</label>
    </interactant>
    <organismsDiffer>false</organismsDiffer>
    <experiments>3</experiments>
</comment>
<comment type="interaction">
    <interactant intactId="EBI-10256990">
        <id>Q7Z3E5-2</id>
    </interactant>
    <interactant intactId="EBI-2548702">
        <id>Q96DZ9</id>
        <label>CMTM5</label>
    </interactant>
    <organismsDiffer>false</organismsDiffer>
    <experiments>3</experiments>
</comment>
<comment type="interaction">
    <interactant intactId="EBI-10256990">
        <id>Q7Z3E5-2</id>
    </interactant>
    <interactant intactId="EBI-11959635">
        <id>Q9P2G9-2</id>
        <label>KLHL8</label>
    </interactant>
    <organismsDiffer>false</organismsDiffer>
    <experiments>3</experiments>
</comment>
<comment type="interaction">
    <interactant intactId="EBI-10256990">
        <id>Q7Z3E5-2</id>
    </interactant>
    <interactant intactId="EBI-747107">
        <id>Q8IUQ4</id>
        <label>SIAH1</label>
    </interactant>
    <organismsDiffer>false</organismsDiffer>
    <experiments>3</experiments>
</comment>
<comment type="subcellular location">
    <subcellularLocation>
        <location evidence="9">Cytoplasm</location>
        <location evidence="9">Cytoskeleton</location>
        <location evidence="9">Cilium basal body</location>
    </subcellularLocation>
    <subcellularLocation>
        <location evidence="2">Cell projection</location>
        <location evidence="2">Cilium</location>
    </subcellularLocation>
    <subcellularLocation>
        <location evidence="9">Cytoplasm</location>
        <location evidence="9">Cytoskeleton</location>
        <location evidence="9">Microtubule organizing center</location>
        <location evidence="9">Centrosome</location>
        <location evidence="9">Centriole</location>
    </subcellularLocation>
    <text evidence="2 9">Localized to the proximal region in cilia. Stimulation of Hh signaling leads to redistribution of ARMC9 toward the ciliary tip within 6 hours, follow by a gradual return to its original proximal location (By similarity). Localizes to the daughter centriole of the primary cilium in RPE1 cells (PubMed:28625504).</text>
</comment>
<comment type="alternative products">
    <event type="alternative splicing"/>
    <isoform>
        <id>Q7Z3E5-1</id>
        <name>1</name>
        <sequence type="displayed"/>
    </isoform>
    <isoform>
        <id>Q7Z3E5-2</id>
        <name>2</name>
        <sequence type="described" ref="VSP_023804"/>
    </isoform>
</comment>
<comment type="tissue specificity">
    <text evidence="6">Strongly expressed in most melanomas and melanocytes. Weakly expressed in the testis.</text>
</comment>
<comment type="induction">
    <text evidence="9">Up-regulated in response to serum starvation in fibroblasts.</text>
</comment>
<comment type="disease" evidence="9">
    <disease id="DI-05051">
        <name>Joubert syndrome 30</name>
        <acronym>JBTS30</acronym>
        <description>A form of Joubert syndrome, a disorder presenting with cerebellar ataxia, oculomotor apraxia, hypotonia, neonatal breathing abnormalities and psychomotor delay. Neuroradiologically, it is characterized by cerebellar vermian hypoplasia/aplasia, thickened and reoriented superior cerebellar peduncles, and an abnormally large interpeduncular fossa, giving the appearance of a molar tooth on transaxial slices (molar tooth sign). Additional variable features include retinal dystrophy, renal disease, liver fibrosis, and polydactyly. JBTS30 inheritance is autosomal recessive.</description>
        <dbReference type="MIM" id="617622"/>
    </disease>
    <text>The disease is caused by variants affecting the gene represented in this entry.</text>
</comment>
<comment type="sequence caution" evidence="17">
    <conflict type="erroneous initiation">
        <sequence resource="EMBL-CDS" id="BAB14153"/>
    </conflict>
    <text>Truncated N-terminus.</text>
</comment>
<sequence length="818" mass="91819">MGDILAHESELLGLVKEYLDFAEFEDTLKTFSKECKIKGKPLCKTVGGSFRDSKSLTIQKDLVAAFDNGDQKVFFDLWEEHISSSIRDGDSFAQKLEFYLHIHFAIYLLKYSVGRPDKEELDEKISYFKTYLETKGAALSQTTEFLPFYALPFVPNPMVHPSFKELFQDSWTPELKLKLIKFLALISKASNTPKLLTIYKENGQSNKEILQQLHQQLVEAERRSVTYLKRYNKIQADYHNLIGVTAELVDSLEATVSGKMITPEYLQSVCVRLFSNQMRQSLAHSVDFTRPGTASTMLRASLAPVKLKDVPLLPSLDYEKLKKDLILGSDRLKAFLLQALRWRLTTSHPGEQRETVLQAYISNDLLDCYSHNQRSVLQLLHSTSDVVRQYMARLINAFASLAEGRLYLAQNTKVLQMLEGRLKEEDKDIITRENVLGALQKFSLRRPLQTAMIQDGLIFWLVDVLKDPDCLSDYTLEYSVALLMNLCLRSTGKNMCAKVAGLVLKVLSDLLGHENHEIQPYVNGALYSILSVPSIREEARAMGMEDILRCFIKEGNAEMIRQIEFIIKQLNSEELPDGVLESDDDEDEDDEEDHDIMEADLDKDELIQPQLGELSGEKLLTTEYLGIMTNTGKTRRKGLANVQWSGDEPLQRPVTPGGHRNGYPVVEDQHTPPQTAQHARNGHPQALPAAHEAVYREGKPSTPESCVSSSSAIIAKPGEWLPRGRQEEPRPAPTGTPRQPREAPQDPGNGVTTRECASAFTCKPRAPCTPEMLDWNPPKAKASVLAPLFSSCGPQQASRPGSTASSTRGLPSSQSHRK</sequence>
<proteinExistence type="evidence at protein level"/>
<dbReference type="EMBL" id="AY929062">
    <property type="protein sequence ID" value="AAX22760.1"/>
    <property type="molecule type" value="mRNA"/>
</dbReference>
<dbReference type="EMBL" id="AY219922">
    <property type="protein sequence ID" value="AAO63554.1"/>
    <property type="molecule type" value="mRNA"/>
</dbReference>
<dbReference type="EMBL" id="BX537956">
    <property type="protein sequence ID" value="CAD97923.1"/>
    <property type="molecule type" value="mRNA"/>
</dbReference>
<dbReference type="EMBL" id="AC009407">
    <property type="protein sequence ID" value="AAX93129.1"/>
    <property type="molecule type" value="Genomic_DNA"/>
</dbReference>
<dbReference type="EMBL" id="AC018738">
    <property type="status" value="NOT_ANNOTATED_CDS"/>
    <property type="molecule type" value="Genomic_DNA"/>
</dbReference>
<dbReference type="EMBL" id="KF510794">
    <property type="status" value="NOT_ANNOTATED_CDS"/>
    <property type="molecule type" value="Genomic_DNA"/>
</dbReference>
<dbReference type="EMBL" id="KF510790">
    <property type="status" value="NOT_ANNOTATED_CDS"/>
    <property type="molecule type" value="Genomic_DNA"/>
</dbReference>
<dbReference type="EMBL" id="KF510793">
    <property type="status" value="NOT_ANNOTATED_CDS"/>
    <property type="molecule type" value="Genomic_DNA"/>
</dbReference>
<dbReference type="EMBL" id="BC004514">
    <property type="protein sequence ID" value="AAH04514.2"/>
    <property type="molecule type" value="mRNA"/>
</dbReference>
<dbReference type="EMBL" id="BC065271">
    <property type="protein sequence ID" value="AAH65271.1"/>
    <property type="molecule type" value="mRNA"/>
</dbReference>
<dbReference type="EMBL" id="AK022646">
    <property type="protein sequence ID" value="BAB14153.1"/>
    <property type="status" value="ALT_INIT"/>
    <property type="molecule type" value="mRNA"/>
</dbReference>
<dbReference type="EMBL" id="AB058771">
    <property type="protein sequence ID" value="BAB47497.1"/>
    <property type="molecule type" value="mRNA"/>
</dbReference>
<dbReference type="CCDS" id="CCDS74666.1">
    <molecule id="Q7Z3E5-1"/>
</dbReference>
<dbReference type="RefSeq" id="NP_001258395.2">
    <molecule id="Q7Z3E5-1"/>
    <property type="nucleotide sequence ID" value="NM_001271466.4"/>
</dbReference>
<dbReference type="RefSeq" id="NP_001278585.1">
    <property type="nucleotide sequence ID" value="NM_001291656.1"/>
</dbReference>
<dbReference type="RefSeq" id="NP_001339683.2">
    <molecule id="Q7Z3E5-1"/>
    <property type="nucleotide sequence ID" value="NM_001352754.2"/>
</dbReference>
<dbReference type="RefSeq" id="NP_079415.3">
    <property type="nucleotide sequence ID" value="NM_025139.5"/>
</dbReference>
<dbReference type="RefSeq" id="XP_011510213.1">
    <property type="nucleotide sequence ID" value="XM_011511911.1"/>
</dbReference>
<dbReference type="RefSeq" id="XP_016860512.1">
    <property type="nucleotide sequence ID" value="XM_017005023.1"/>
</dbReference>
<dbReference type="SMR" id="Q7Z3E5"/>
<dbReference type="BioGRID" id="123179">
    <property type="interactions" value="26"/>
</dbReference>
<dbReference type="FunCoup" id="Q7Z3E5">
    <property type="interactions" value="253"/>
</dbReference>
<dbReference type="IntAct" id="Q7Z3E5">
    <property type="interactions" value="12"/>
</dbReference>
<dbReference type="MINT" id="Q7Z3E5"/>
<dbReference type="STRING" id="9606.ENSP00000484804"/>
<dbReference type="GlyGen" id="Q7Z3E5">
    <property type="glycosylation" value="1 site"/>
</dbReference>
<dbReference type="iPTMnet" id="Q7Z3E5"/>
<dbReference type="PhosphoSitePlus" id="Q7Z3E5"/>
<dbReference type="BioMuta" id="ARMC9"/>
<dbReference type="DMDM" id="134035387"/>
<dbReference type="jPOST" id="Q7Z3E5"/>
<dbReference type="MassIVE" id="Q7Z3E5"/>
<dbReference type="PaxDb" id="9606-ENSP00000484804"/>
<dbReference type="PeptideAtlas" id="Q7Z3E5"/>
<dbReference type="ProteomicsDB" id="69042">
    <molecule id="Q7Z3E5-1"/>
</dbReference>
<dbReference type="ProteomicsDB" id="69043">
    <molecule id="Q7Z3E5-2"/>
</dbReference>
<dbReference type="Pumba" id="Q7Z3E5"/>
<dbReference type="Antibodypedia" id="20202">
    <property type="antibodies" value="106 antibodies from 18 providers"/>
</dbReference>
<dbReference type="DNASU" id="80210"/>
<dbReference type="Ensembl" id="ENST00000611582.5">
    <molecule id="Q7Z3E5-1"/>
    <property type="protein sequence ID" value="ENSP00000484804.1"/>
    <property type="gene ID" value="ENSG00000135931.19"/>
</dbReference>
<dbReference type="GeneID" id="80210"/>
<dbReference type="KEGG" id="hsa:80210"/>
<dbReference type="MANE-Select" id="ENST00000611582.5">
    <property type="protein sequence ID" value="ENSP00000484804.1"/>
    <property type="RefSeq nucleotide sequence ID" value="NM_001352754.2"/>
    <property type="RefSeq protein sequence ID" value="NP_001339683.2"/>
</dbReference>
<dbReference type="UCSC" id="uc002vrq.6">
    <molecule id="Q7Z3E5-1"/>
    <property type="organism name" value="human"/>
</dbReference>
<dbReference type="UCSC" id="uc032ovg.1">
    <property type="organism name" value="human"/>
</dbReference>
<dbReference type="AGR" id="HGNC:20730"/>
<dbReference type="CTD" id="80210"/>
<dbReference type="DisGeNET" id="80210"/>
<dbReference type="GeneCards" id="ARMC9"/>
<dbReference type="HGNC" id="HGNC:20730">
    <property type="gene designation" value="ARMC9"/>
</dbReference>
<dbReference type="HPA" id="ENSG00000135931">
    <property type="expression patterns" value="Tissue enhanced (retina)"/>
</dbReference>
<dbReference type="MalaCards" id="ARMC9"/>
<dbReference type="MIM" id="617612">
    <property type="type" value="gene"/>
</dbReference>
<dbReference type="MIM" id="617622">
    <property type="type" value="phenotype"/>
</dbReference>
<dbReference type="neXtProt" id="NX_Q7Z3E5"/>
<dbReference type="OpenTargets" id="ENSG00000135931"/>
<dbReference type="Orphanet" id="475">
    <property type="disease" value="Joubert syndrome"/>
</dbReference>
<dbReference type="PharmGKB" id="PA142672581"/>
<dbReference type="VEuPathDB" id="HostDB:ENSG00000135931"/>
<dbReference type="eggNOG" id="ENOG502QQ9W">
    <property type="taxonomic scope" value="Eukaryota"/>
</dbReference>
<dbReference type="GeneTree" id="ENSGT00390000018026"/>
<dbReference type="HOGENOM" id="CLU_007962_1_0_1"/>
<dbReference type="InParanoid" id="Q7Z3E5"/>
<dbReference type="OMA" id="QQSDKEF"/>
<dbReference type="OrthoDB" id="538223at2759"/>
<dbReference type="PAN-GO" id="Q7Z3E5">
    <property type="GO annotations" value="4 GO annotations based on evolutionary models"/>
</dbReference>
<dbReference type="PhylomeDB" id="Q7Z3E5"/>
<dbReference type="TreeFam" id="TF317676"/>
<dbReference type="PathwayCommons" id="Q7Z3E5"/>
<dbReference type="SignaLink" id="Q7Z3E5"/>
<dbReference type="BioGRID-ORCS" id="80210">
    <property type="hits" value="16 hits in 1150 CRISPR screens"/>
</dbReference>
<dbReference type="ChiTaRS" id="ARMC9">
    <property type="organism name" value="human"/>
</dbReference>
<dbReference type="GeneWiki" id="ARMC9"/>
<dbReference type="GenomeRNAi" id="80210"/>
<dbReference type="Pharos" id="Q7Z3E5">
    <property type="development level" value="Tbio"/>
</dbReference>
<dbReference type="PRO" id="PR:Q7Z3E5"/>
<dbReference type="Proteomes" id="UP000005640">
    <property type="component" value="Chromosome 2"/>
</dbReference>
<dbReference type="RNAct" id="Q7Z3E5">
    <property type="molecule type" value="protein"/>
</dbReference>
<dbReference type="Bgee" id="ENSG00000135931">
    <property type="expression patterns" value="Expressed in stromal cell of endometrium and 178 other cell types or tissues"/>
</dbReference>
<dbReference type="ExpressionAtlas" id="Q7Z3E5">
    <property type="expression patterns" value="baseline and differential"/>
</dbReference>
<dbReference type="GO" id="GO:0005814">
    <property type="term" value="C:centriole"/>
    <property type="evidence" value="ECO:0000314"/>
    <property type="project" value="UniProtKB"/>
</dbReference>
<dbReference type="GO" id="GO:0036064">
    <property type="term" value="C:ciliary basal body"/>
    <property type="evidence" value="ECO:0000314"/>
    <property type="project" value="UniProtKB"/>
</dbReference>
<dbReference type="GO" id="GO:0097542">
    <property type="term" value="C:ciliary tip"/>
    <property type="evidence" value="ECO:0000250"/>
    <property type="project" value="UniProtKB"/>
</dbReference>
<dbReference type="GO" id="GO:0005737">
    <property type="term" value="C:cytoplasm"/>
    <property type="evidence" value="ECO:0007669"/>
    <property type="project" value="UniProtKB-KW"/>
</dbReference>
<dbReference type="GO" id="GO:0070062">
    <property type="term" value="C:extracellular exosome"/>
    <property type="evidence" value="ECO:0007005"/>
    <property type="project" value="UniProtKB"/>
</dbReference>
<dbReference type="GO" id="GO:0060271">
    <property type="term" value="P:cilium assembly"/>
    <property type="evidence" value="ECO:0000250"/>
    <property type="project" value="UniProtKB"/>
</dbReference>
<dbReference type="GO" id="GO:0045880">
    <property type="term" value="P:positive regulation of smoothened signaling pathway"/>
    <property type="evidence" value="ECO:0000250"/>
    <property type="project" value="UniProtKB"/>
</dbReference>
<dbReference type="FunFam" id="1.25.10.10:FF:000124">
    <property type="entry name" value="lisH domain-containing protein ARMC9 isoform X1"/>
    <property type="match status" value="1"/>
</dbReference>
<dbReference type="Gene3D" id="1.25.10.10">
    <property type="entry name" value="Leucine-rich Repeat Variant"/>
    <property type="match status" value="1"/>
</dbReference>
<dbReference type="InterPro" id="IPR011989">
    <property type="entry name" value="ARM-like"/>
</dbReference>
<dbReference type="InterPro" id="IPR016024">
    <property type="entry name" value="ARM-type_fold"/>
</dbReference>
<dbReference type="InterPro" id="IPR040369">
    <property type="entry name" value="ARMC9"/>
</dbReference>
<dbReference type="InterPro" id="IPR048959">
    <property type="entry name" value="ARMC9_ARM_dom"/>
</dbReference>
<dbReference type="InterPro" id="IPR056327">
    <property type="entry name" value="ARMC9_CTLH-like_dom"/>
</dbReference>
<dbReference type="InterPro" id="IPR048957">
    <property type="entry name" value="ARMC9_LisH"/>
</dbReference>
<dbReference type="InterPro" id="IPR006594">
    <property type="entry name" value="LisH"/>
</dbReference>
<dbReference type="PANTHER" id="PTHR14881">
    <property type="entry name" value="LISH DOMAIN-CONTAINING PROTEIN ARMC9"/>
    <property type="match status" value="1"/>
</dbReference>
<dbReference type="PANTHER" id="PTHR14881:SF4">
    <property type="entry name" value="LISH DOMAIN-CONTAINING PROTEIN ARMC9"/>
    <property type="match status" value="1"/>
</dbReference>
<dbReference type="Pfam" id="PF21050">
    <property type="entry name" value="ARMC9_ARM"/>
    <property type="match status" value="1"/>
</dbReference>
<dbReference type="Pfam" id="PF21051">
    <property type="entry name" value="ARMC9_LisH"/>
    <property type="match status" value="1"/>
</dbReference>
<dbReference type="Pfam" id="PF23138">
    <property type="entry name" value="CTLH_Armc9"/>
    <property type="match status" value="1"/>
</dbReference>
<dbReference type="SMART" id="SM00667">
    <property type="entry name" value="LisH"/>
    <property type="match status" value="1"/>
</dbReference>
<dbReference type="SUPFAM" id="SSF48371">
    <property type="entry name" value="ARM repeat"/>
    <property type="match status" value="1"/>
</dbReference>
<dbReference type="PROSITE" id="PS50896">
    <property type="entry name" value="LISH"/>
    <property type="match status" value="1"/>
</dbReference>
<feature type="chain" id="PRO_0000280595" description="LisH domain-containing protein ARMC9">
    <location>
        <begin position="1"/>
        <end position="818"/>
    </location>
</feature>
<feature type="domain" description="LisH" evidence="4">
    <location>
        <begin position="7"/>
        <end position="39"/>
    </location>
</feature>
<feature type="region of interest" description="Disordered" evidence="5">
    <location>
        <begin position="642"/>
        <end position="755"/>
    </location>
</feature>
<feature type="region of interest" description="Disordered" evidence="5">
    <location>
        <begin position="790"/>
        <end position="818"/>
    </location>
</feature>
<feature type="coiled-coil region" evidence="3">
    <location>
        <begin position="204"/>
        <end position="230"/>
    </location>
</feature>
<feature type="compositionally biased region" description="Low complexity" evidence="5">
    <location>
        <begin position="701"/>
        <end position="711"/>
    </location>
</feature>
<feature type="compositionally biased region" description="Polar residues" evidence="5">
    <location>
        <begin position="792"/>
        <end position="818"/>
    </location>
</feature>
<feature type="modified residue" description="Phosphoserine" evidence="19">
    <location>
        <position position="582"/>
    </location>
</feature>
<feature type="splice variant" id="VSP_023804" description="In isoform 2." evidence="12 13 14 15 16">
    <location>
        <begin position="666"/>
        <end position="817"/>
    </location>
</feature>
<feature type="sequence variant" id="VAR_080497" description="In JBTS30; uncertain significance; dbSNP:rs750247691." evidence="9">
    <original>G</original>
    <variation>R</variation>
    <location>
        <position position="69"/>
    </location>
</feature>
<feature type="sequence variant" id="VAR_080498" description="In JBTS30; uncertain significance." evidence="9">
    <location>
        <position position="87"/>
    </location>
</feature>
<feature type="sequence variant" id="VAR_031170" description="In dbSNP:rs11558175." evidence="7">
    <original>L</original>
    <variation>F</variation>
    <location>
        <position position="108"/>
    </location>
</feature>
<feature type="sequence variant" id="VAR_056739" description="In dbSNP:rs1626450.">
    <original>I</original>
    <variation>V</variation>
    <location>
        <position position="180"/>
    </location>
</feature>
<feature type="sequence variant" id="VAR_031171" description="In dbSNP:rs16827883.">
    <original>I</original>
    <variation>T</variation>
    <location>
        <position position="209"/>
    </location>
</feature>
<feature type="sequence variant" id="VAR_031172" description="In dbSNP:rs3752780.">
    <original>R</original>
    <variation>H</variation>
    <location>
        <position position="222"/>
    </location>
</feature>
<feature type="sequence variant" id="VAR_069411" evidence="8">
    <original>D</original>
    <variation>N</variation>
    <location>
        <position position="330"/>
    </location>
</feature>
<feature type="sequence variant" id="VAR_080499" description="In JBTS30; uncertain significance; dbSNP:rs759799287." evidence="9">
    <original>R</original>
    <variation>C</variation>
    <location>
        <position position="343"/>
    </location>
</feature>
<feature type="sequence variant" id="VAR_080500" description="In JBTS30; uncertain significance; dbSNP:rs753432312." evidence="9">
    <original>R</original>
    <variation>C</variation>
    <location>
        <position position="446"/>
    </location>
</feature>
<feature type="sequence variant" id="VAR_080501" description="In JBTS30; uncertain significance; dbSNP:rs780265931." evidence="9">
    <original>G</original>
    <variation>R</variation>
    <location>
        <position position="492"/>
    </location>
</feature>
<feature type="sequence variant" id="VAR_080502" description="In JBTS30; uncertain significance; dbSNP:rs1114167449." evidence="9">
    <original>P</original>
    <variation>L</variation>
    <location>
        <position position="520"/>
    </location>
</feature>
<feature type="sequence conflict" description="In Ref. 1; AAX22760, 2; AAO63554, 3; CAD97923, 5; AAH04514/AAH65271 and 6; BAB14153." evidence="17" ref="1 2 3 5 6">
    <original>I</original>
    <variation>E</variation>
    <location>
        <position position="180"/>
    </location>
</feature>
<feature type="sequence conflict" description="In Ref. 2; AAO63554." evidence="17" ref="2">
    <original>L</original>
    <variation>P</variation>
    <location>
        <position position="436"/>
    </location>
</feature>
<evidence type="ECO:0000250" key="1">
    <source>
        <dbReference type="UniProtKB" id="E7F187"/>
    </source>
</evidence>
<evidence type="ECO:0000250" key="2">
    <source>
        <dbReference type="UniProtKB" id="Q9D2I5"/>
    </source>
</evidence>
<evidence type="ECO:0000255" key="3"/>
<evidence type="ECO:0000255" key="4">
    <source>
        <dbReference type="PROSITE-ProRule" id="PRU00126"/>
    </source>
</evidence>
<evidence type="ECO:0000256" key="5">
    <source>
        <dbReference type="SAM" id="MobiDB-lite"/>
    </source>
</evidence>
<evidence type="ECO:0000269" key="6">
    <source>
    </source>
</evidence>
<evidence type="ECO:0000269" key="7">
    <source>
    </source>
</evidence>
<evidence type="ECO:0000269" key="8">
    <source>
    </source>
</evidence>
<evidence type="ECO:0000269" key="9">
    <source>
    </source>
</evidence>
<evidence type="ECO:0000269" key="10">
    <source>
    </source>
</evidence>
<evidence type="ECO:0000269" key="11">
    <source>
    </source>
</evidence>
<evidence type="ECO:0000303" key="12">
    <source>
    </source>
</evidence>
<evidence type="ECO:0000303" key="13">
    <source>
    </source>
</evidence>
<evidence type="ECO:0000303" key="14">
    <source>
    </source>
</evidence>
<evidence type="ECO:0000303" key="15">
    <source>
    </source>
</evidence>
<evidence type="ECO:0000303" key="16">
    <source ref="2"/>
</evidence>
<evidence type="ECO:0000305" key="17"/>
<evidence type="ECO:0000312" key="18">
    <source>
        <dbReference type="HGNC" id="HGNC:20730"/>
    </source>
</evidence>
<evidence type="ECO:0007744" key="19">
    <source>
    </source>
</evidence>
<accession>Q7Z3E5</accession>
<accession>A0A087X1I8</accession>
<accession>Q53TI3</accession>
<accession>Q6P162</accession>
<accession>Q7L594</accession>
<accession>Q86WG2</accession>
<accession>Q96JF9</accession>
<accession>Q9H9R8</accession>